<organism>
    <name type="scientific">Bartonella tribocorum (strain CIP 105476 / IBS 506)</name>
    <dbReference type="NCBI Taxonomy" id="382640"/>
    <lineage>
        <taxon>Bacteria</taxon>
        <taxon>Pseudomonadati</taxon>
        <taxon>Pseudomonadota</taxon>
        <taxon>Alphaproteobacteria</taxon>
        <taxon>Hyphomicrobiales</taxon>
        <taxon>Bartonellaceae</taxon>
        <taxon>Bartonella</taxon>
    </lineage>
</organism>
<gene>
    <name evidence="1" type="primary">rplF</name>
    <name type="ordered locus">BT_1503</name>
</gene>
<dbReference type="EMBL" id="AM260525">
    <property type="protein sequence ID" value="CAK01849.1"/>
    <property type="molecule type" value="Genomic_DNA"/>
</dbReference>
<dbReference type="RefSeq" id="WP_012231987.1">
    <property type="nucleotide sequence ID" value="NC_010161.1"/>
</dbReference>
<dbReference type="SMR" id="A9IW07"/>
<dbReference type="KEGG" id="btr:BT_1503"/>
<dbReference type="eggNOG" id="COG0097">
    <property type="taxonomic scope" value="Bacteria"/>
</dbReference>
<dbReference type="HOGENOM" id="CLU_065464_1_2_5"/>
<dbReference type="Proteomes" id="UP000001592">
    <property type="component" value="Chromosome"/>
</dbReference>
<dbReference type="GO" id="GO:0022625">
    <property type="term" value="C:cytosolic large ribosomal subunit"/>
    <property type="evidence" value="ECO:0007669"/>
    <property type="project" value="TreeGrafter"/>
</dbReference>
<dbReference type="GO" id="GO:0019843">
    <property type="term" value="F:rRNA binding"/>
    <property type="evidence" value="ECO:0007669"/>
    <property type="project" value="UniProtKB-UniRule"/>
</dbReference>
<dbReference type="GO" id="GO:0003735">
    <property type="term" value="F:structural constituent of ribosome"/>
    <property type="evidence" value="ECO:0007669"/>
    <property type="project" value="InterPro"/>
</dbReference>
<dbReference type="GO" id="GO:0002181">
    <property type="term" value="P:cytoplasmic translation"/>
    <property type="evidence" value="ECO:0007669"/>
    <property type="project" value="TreeGrafter"/>
</dbReference>
<dbReference type="FunFam" id="3.90.930.12:FF:000001">
    <property type="entry name" value="50S ribosomal protein L6"/>
    <property type="match status" value="1"/>
</dbReference>
<dbReference type="Gene3D" id="3.90.930.12">
    <property type="entry name" value="Ribosomal protein L6, alpha-beta domain"/>
    <property type="match status" value="2"/>
</dbReference>
<dbReference type="HAMAP" id="MF_01365_B">
    <property type="entry name" value="Ribosomal_uL6_B"/>
    <property type="match status" value="1"/>
</dbReference>
<dbReference type="InterPro" id="IPR000702">
    <property type="entry name" value="Ribosomal_uL6-like"/>
</dbReference>
<dbReference type="InterPro" id="IPR036789">
    <property type="entry name" value="Ribosomal_uL6-like_a/b-dom_sf"/>
</dbReference>
<dbReference type="InterPro" id="IPR020040">
    <property type="entry name" value="Ribosomal_uL6_a/b-dom"/>
</dbReference>
<dbReference type="InterPro" id="IPR019906">
    <property type="entry name" value="Ribosomal_uL6_bac-type"/>
</dbReference>
<dbReference type="InterPro" id="IPR002358">
    <property type="entry name" value="Ribosomal_uL6_CS"/>
</dbReference>
<dbReference type="NCBIfam" id="TIGR03654">
    <property type="entry name" value="L6_bact"/>
    <property type="match status" value="1"/>
</dbReference>
<dbReference type="PANTHER" id="PTHR11655">
    <property type="entry name" value="60S/50S RIBOSOMAL PROTEIN L6/L9"/>
    <property type="match status" value="1"/>
</dbReference>
<dbReference type="PANTHER" id="PTHR11655:SF14">
    <property type="entry name" value="LARGE RIBOSOMAL SUBUNIT PROTEIN UL6M"/>
    <property type="match status" value="1"/>
</dbReference>
<dbReference type="Pfam" id="PF00347">
    <property type="entry name" value="Ribosomal_L6"/>
    <property type="match status" value="2"/>
</dbReference>
<dbReference type="PIRSF" id="PIRSF002162">
    <property type="entry name" value="Ribosomal_L6"/>
    <property type="match status" value="1"/>
</dbReference>
<dbReference type="PRINTS" id="PR00059">
    <property type="entry name" value="RIBOSOMALL6"/>
</dbReference>
<dbReference type="SUPFAM" id="SSF56053">
    <property type="entry name" value="Ribosomal protein L6"/>
    <property type="match status" value="2"/>
</dbReference>
<dbReference type="PROSITE" id="PS00525">
    <property type="entry name" value="RIBOSOMAL_L6_1"/>
    <property type="match status" value="1"/>
</dbReference>
<name>RL6_BART1</name>
<comment type="function">
    <text evidence="1">This protein binds to the 23S rRNA, and is important in its secondary structure. It is located near the subunit interface in the base of the L7/L12 stalk, and near the tRNA binding site of the peptidyltransferase center.</text>
</comment>
<comment type="subunit">
    <text evidence="1">Part of the 50S ribosomal subunit.</text>
</comment>
<comment type="similarity">
    <text evidence="1">Belongs to the universal ribosomal protein uL6 family.</text>
</comment>
<keyword id="KW-0687">Ribonucleoprotein</keyword>
<keyword id="KW-0689">Ribosomal protein</keyword>
<keyword id="KW-0694">RNA-binding</keyword>
<keyword id="KW-0699">rRNA-binding</keyword>
<reference key="1">
    <citation type="journal article" date="2007" name="Nat. Genet.">
        <title>Genomic analysis of Bartonella identifies type IV secretion systems as host adaptability factors.</title>
        <authorList>
            <person name="Saenz H.L."/>
            <person name="Engel P."/>
            <person name="Stoeckli M.C."/>
            <person name="Lanz C."/>
            <person name="Raddatz G."/>
            <person name="Vayssier-Taussat M."/>
            <person name="Birtles R."/>
            <person name="Schuster S.C."/>
            <person name="Dehio C."/>
        </authorList>
    </citation>
    <scope>NUCLEOTIDE SEQUENCE [LARGE SCALE GENOMIC DNA]</scope>
    <source>
        <strain>CIP 105476 / IBS 506</strain>
    </source>
</reference>
<accession>A9IW07</accession>
<feature type="chain" id="PRO_1000087029" description="Large ribosomal subunit protein uL6">
    <location>
        <begin position="1"/>
        <end position="177"/>
    </location>
</feature>
<feature type="region of interest" description="Disordered" evidence="2">
    <location>
        <begin position="155"/>
        <end position="177"/>
    </location>
</feature>
<protein>
    <recommendedName>
        <fullName evidence="1">Large ribosomal subunit protein uL6</fullName>
    </recommendedName>
    <alternativeName>
        <fullName evidence="3">50S ribosomal protein L6</fullName>
    </alternativeName>
</protein>
<evidence type="ECO:0000255" key="1">
    <source>
        <dbReference type="HAMAP-Rule" id="MF_01365"/>
    </source>
</evidence>
<evidence type="ECO:0000256" key="2">
    <source>
        <dbReference type="SAM" id="MobiDB-lite"/>
    </source>
</evidence>
<evidence type="ECO:0000305" key="3"/>
<proteinExistence type="inferred from homology"/>
<sequence length="177" mass="19630">MSRIGKRPISIPSGVTATVEGQLVKAKGPKGELSYVVNDEVLVKFEENVISVMPRDQSKDARSKWGMSRSMIENIFCGVKDGFEKRLEINGVGYRAALQGKDIQLSLGFSHDVVYKVPSGVTVTVPKPTEIVISGIDKQQVGQVAAEIREYRRPEPYKGKGVKHADERIFRKEGKKK</sequence>